<evidence type="ECO:0000250" key="1">
    <source>
        <dbReference type="UniProtKB" id="P53990"/>
    </source>
</evidence>
<evidence type="ECO:0000256" key="2">
    <source>
        <dbReference type="SAM" id="MobiDB-lite"/>
    </source>
</evidence>
<evidence type="ECO:0000305" key="3"/>
<proteinExistence type="evidence at transcript level"/>
<organism>
    <name type="scientific">Bos taurus</name>
    <name type="common">Bovine</name>
    <dbReference type="NCBI Taxonomy" id="9913"/>
    <lineage>
        <taxon>Eukaryota</taxon>
        <taxon>Metazoa</taxon>
        <taxon>Chordata</taxon>
        <taxon>Craniata</taxon>
        <taxon>Vertebrata</taxon>
        <taxon>Euteleostomi</taxon>
        <taxon>Mammalia</taxon>
        <taxon>Eutheria</taxon>
        <taxon>Laurasiatheria</taxon>
        <taxon>Artiodactyla</taxon>
        <taxon>Ruminantia</taxon>
        <taxon>Pecora</taxon>
        <taxon>Bovidae</taxon>
        <taxon>Bovinae</taxon>
        <taxon>Bos</taxon>
    </lineage>
</organism>
<accession>Q3ZBV1</accession>
<name>IST1_BOVIN</name>
<protein>
    <recommendedName>
        <fullName>IST1 homolog</fullName>
    </recommendedName>
    <alternativeName>
        <fullName evidence="1">Charged multivesicular body protein 8</fullName>
        <shortName evidence="1">CHMP8</shortName>
    </alternativeName>
</protein>
<reference key="1">
    <citation type="submission" date="2005-08" db="EMBL/GenBank/DDBJ databases">
        <authorList>
            <consortium name="NIH - Mammalian Gene Collection (MGC) project"/>
        </authorList>
    </citation>
    <scope>NUCLEOTIDE SEQUENCE [LARGE SCALE MRNA]</scope>
    <source>
        <strain>Crossbred X Angus</strain>
        <tissue>Ileum</tissue>
    </source>
</reference>
<feature type="chain" id="PRO_0000274478" description="IST1 homolog">
    <location>
        <begin position="1"/>
        <end position="364"/>
    </location>
</feature>
<feature type="region of interest" description="Disordered" evidence="2">
    <location>
        <begin position="292"/>
        <end position="352"/>
    </location>
</feature>
<feature type="compositionally biased region" description="Polar residues" evidence="2">
    <location>
        <begin position="334"/>
        <end position="345"/>
    </location>
</feature>
<feature type="modified residue" description="Phosphoserine" evidence="1">
    <location>
        <position position="4"/>
    </location>
</feature>
<feature type="modified residue" description="Phosphotyrosine" evidence="1">
    <location>
        <position position="43"/>
    </location>
</feature>
<gene>
    <name type="primary">IST1</name>
</gene>
<keyword id="KW-0131">Cell cycle</keyword>
<keyword id="KW-0132">Cell division</keyword>
<keyword id="KW-0963">Cytoplasm</keyword>
<keyword id="KW-0968">Cytoplasmic vesicle</keyword>
<keyword id="KW-0206">Cytoskeleton</keyword>
<keyword id="KW-0539">Nucleus</keyword>
<keyword id="KW-0597">Phosphoprotein</keyword>
<keyword id="KW-1185">Reference proteome</keyword>
<sequence>MLGSGIKAERLRVNLRLVINRLKLLEKKKTELAQKARKEIADYLAAGKDERARIRVEHIIREDYLVEAMEILELYCDLLLARFGLIQSMKELDSGLAESVSTLIWAAPRLQSEVAELKIVADQLCAKYSKEYGKLCRTNQIGTVNDRLMHKLSVEAPPKILVERYLIEIAKNYNVPYEPDSVVMAEAPPGVETDLIDVGFTDDVKKGGPGRGGGGGFTAPVGGPDGTVPMPMPMPMPSPNTPFSYPLPKGPSDFNGLPVGTYQAFPNIHPPQIPATPPSYESVDDINADKNVSSTQIVGPGPKPEPPAKPASRLTETYDNFVLPELPSVPDTLPTASPGANTSASEDIDFDDLSRRFEELKKKT</sequence>
<comment type="function">
    <text evidence="1">ESCRT-III-like protein involved in cytokinesis, nuclear envelope reassembly and endosomal tubulation (By similarity). Is required for efficient abscission during cytokinesis (By similarity). Involved in recruiting VPS4A and/or VPS4B to the midbody of dividing cells (By similarity). During late anaphase, involved in nuclear envelope reassembly and mitotic spindle disassembly together with the ESCRT-III complex: IST1 acts by mediating the recruitment of SPAST to the nuclear membrane, leading to microtubule severing (By similarity). Recruited to the reforming nuclear envelope (NE) during anaphase by LEMD2 (By similarity). Regulates early endosomal tubulation together with the ESCRT-III complex by mediating the recruitment of SPAST (By similarity).</text>
</comment>
<comment type="subunit">
    <text evidence="1">Interacts with CHMP1A, CHMP1B, VPS4A and VTA1. Interacts with SPAST, STAMBP, and USP8. May interact with VPS37B. May associate with the ESCRT-I complex. Interacts with MITD1, in competition with VSP4. Interacts with SPART (via MIT domain); leading to the recruitment of SPART to midbodies. Interacts with SPAST.</text>
</comment>
<comment type="subcellular location">
    <subcellularLocation>
        <location evidence="1">Cytoplasmic vesicle</location>
    </subcellularLocation>
    <subcellularLocation>
        <location evidence="1">Cytoplasm</location>
        <location evidence="1">Cytoskeleton</location>
        <location evidence="1">Microtubule organizing center</location>
        <location evidence="1">Centrosome</location>
    </subcellularLocation>
    <subcellularLocation>
        <location evidence="1">Midbody</location>
    </subcellularLocation>
    <subcellularLocation>
        <location evidence="1">Nucleus envelope</location>
    </subcellularLocation>
    <text evidence="1">Localizes to centrosome and midbody of dividing cells. Colocalized with SPART to the ends of Flemming bodies during cytokinesis. Localizes to the reforming nuclear envelope on chromatin disks during late anaphase.</text>
</comment>
<comment type="similarity">
    <text evidence="3">Belongs to the IST1 family.</text>
</comment>
<dbReference type="EMBL" id="BC103094">
    <property type="protein sequence ID" value="AAI03095.1"/>
    <property type="molecule type" value="mRNA"/>
</dbReference>
<dbReference type="RefSeq" id="NP_001029507.1">
    <property type="nucleotide sequence ID" value="NM_001034335.2"/>
</dbReference>
<dbReference type="SMR" id="Q3ZBV1"/>
<dbReference type="FunCoup" id="Q3ZBV1">
    <property type="interactions" value="4164"/>
</dbReference>
<dbReference type="STRING" id="9913.ENSBTAP00000032246"/>
<dbReference type="PaxDb" id="9913-ENSBTAP00000032246"/>
<dbReference type="GeneID" id="508900"/>
<dbReference type="KEGG" id="bta:508900"/>
<dbReference type="CTD" id="9798"/>
<dbReference type="eggNOG" id="KOG2027">
    <property type="taxonomic scope" value="Eukaryota"/>
</dbReference>
<dbReference type="InParanoid" id="Q3ZBV1"/>
<dbReference type="OrthoDB" id="29853at2759"/>
<dbReference type="Proteomes" id="UP000009136">
    <property type="component" value="Unplaced"/>
</dbReference>
<dbReference type="GO" id="GO:0005813">
    <property type="term" value="C:centrosome"/>
    <property type="evidence" value="ECO:0007669"/>
    <property type="project" value="UniProtKB-SubCell"/>
</dbReference>
<dbReference type="GO" id="GO:0031410">
    <property type="term" value="C:cytoplasmic vesicle"/>
    <property type="evidence" value="ECO:0007669"/>
    <property type="project" value="UniProtKB-KW"/>
</dbReference>
<dbReference type="GO" id="GO:0030496">
    <property type="term" value="C:midbody"/>
    <property type="evidence" value="ECO:0007669"/>
    <property type="project" value="UniProtKB-SubCell"/>
</dbReference>
<dbReference type="GO" id="GO:0005635">
    <property type="term" value="C:nuclear envelope"/>
    <property type="evidence" value="ECO:0007669"/>
    <property type="project" value="UniProtKB-SubCell"/>
</dbReference>
<dbReference type="GO" id="GO:0051301">
    <property type="term" value="P:cell division"/>
    <property type="evidence" value="ECO:0007669"/>
    <property type="project" value="UniProtKB-KW"/>
</dbReference>
<dbReference type="GO" id="GO:0008104">
    <property type="term" value="P:protein localization"/>
    <property type="evidence" value="ECO:0000318"/>
    <property type="project" value="GO_Central"/>
</dbReference>
<dbReference type="GO" id="GO:0015031">
    <property type="term" value="P:protein transport"/>
    <property type="evidence" value="ECO:0007669"/>
    <property type="project" value="InterPro"/>
</dbReference>
<dbReference type="FunFam" id="1.20.1260.60:FF:000001">
    <property type="entry name" value="IST1 homolog isoform X1"/>
    <property type="match status" value="1"/>
</dbReference>
<dbReference type="Gene3D" id="1.20.1260.60">
    <property type="entry name" value="Vacuolar protein sorting-associated protein Ist1"/>
    <property type="match status" value="1"/>
</dbReference>
<dbReference type="InterPro" id="IPR005061">
    <property type="entry name" value="Ist1"/>
</dbReference>
<dbReference type="InterPro" id="IPR042277">
    <property type="entry name" value="IST1-like"/>
</dbReference>
<dbReference type="PANTHER" id="PTHR12161">
    <property type="entry name" value="IST1 FAMILY MEMBER"/>
    <property type="match status" value="1"/>
</dbReference>
<dbReference type="PANTHER" id="PTHR12161:SF5">
    <property type="entry name" value="IST1 HOMOLOG"/>
    <property type="match status" value="1"/>
</dbReference>
<dbReference type="Pfam" id="PF03398">
    <property type="entry name" value="Ist1"/>
    <property type="match status" value="1"/>
</dbReference>